<organism>
    <name type="scientific">Saccharomyces cerevisiae (strain ATCC 204508 / S288c)</name>
    <name type="common">Baker's yeast</name>
    <dbReference type="NCBI Taxonomy" id="559292"/>
    <lineage>
        <taxon>Eukaryota</taxon>
        <taxon>Fungi</taxon>
        <taxon>Dikarya</taxon>
        <taxon>Ascomycota</taxon>
        <taxon>Saccharomycotina</taxon>
        <taxon>Saccharomycetes</taxon>
        <taxon>Saccharomycetales</taxon>
        <taxon>Saccharomycetaceae</taxon>
        <taxon>Saccharomyces</taxon>
    </lineage>
</organism>
<protein>
    <recommendedName>
        <fullName>Transposon Ty1-ML1 Gag polyprotein</fullName>
    </recommendedName>
    <alternativeName>
        <fullName>Gag-p49</fullName>
    </alternativeName>
    <alternativeName>
        <fullName>Transposon Ty1 protein A</fullName>
        <shortName>TY1A</shortName>
        <shortName>TYA</shortName>
    </alternativeName>
    <alternativeName>
        <fullName>p58</fullName>
    </alternativeName>
    <component>
        <recommendedName>
            <fullName>Capsid protein</fullName>
            <shortName>CA</shortName>
        </recommendedName>
        <alternativeName>
            <fullName>Gag-p45</fullName>
        </alternativeName>
        <alternativeName>
            <fullName>p54</fullName>
        </alternativeName>
    </component>
    <component>
        <recommendedName>
            <fullName>Gag-p4</fullName>
        </recommendedName>
    </component>
</protein>
<keyword id="KW-0963">Cytoplasm</keyword>
<keyword id="KW-0597">Phosphoprotein</keyword>
<keyword id="KW-1185">Reference proteome</keyword>
<keyword id="KW-0688">Ribosomal frameshifting</keyword>
<keyword id="KW-0694">RNA-binding</keyword>
<keyword id="KW-0814">Transposable element</keyword>
<name>YM11A_YEAST</name>
<comment type="function">
    <text evidence="1">Capsid protein (CA) is the structural component of the virus-like particle (VLP), forming the shell that encapsulates the retrotransposons dimeric RNA genome. The particles are assembled from trimer-clustered units and there are holes in the capsid shells that allow for the diffusion of macromolecules. CA also has nucleocapsid-like chaperone activity, promoting primer tRNA(i)-Met annealing to the multipartite primer-binding site (PBS), dimerization of Ty1 RNA and initiation of reverse transcription (By similarity).</text>
</comment>
<comment type="subunit">
    <text evidence="1">Homotrimer.</text>
</comment>
<comment type="subcellular location">
    <subcellularLocation>
        <location evidence="1">Cytoplasm</location>
    </subcellularLocation>
</comment>
<comment type="alternative products">
    <event type="ribosomal frameshifting"/>
    <isoform>
        <id>Q04706-1</id>
        <name>Transposon Ty1-ML1 Gag polyprotein</name>
        <sequence type="displayed"/>
    </isoform>
    <isoform>
        <id>Q04711-1</id>
        <name>Transposon Ty1-ML1 Gag-Pol polyprotein</name>
        <sequence type="external"/>
    </isoform>
    <text evidence="1">The Gag-Pol polyprotein is generated by a +1 ribosomal frameshift. The ratio of Gag:Gag-Pol varies between 20:1 and 5:1 (By similarity).</text>
</comment>
<comment type="induction">
    <text evidence="4">Ty1-ML1 is a weakly expressed element. Induced under amino acid starvation conditions by GCN4.</text>
</comment>
<comment type="domain">
    <text evidence="1">The C-terminal RNA-binding region of CA is sufficient for all its nucleocapsid-like chaperone activities.</text>
</comment>
<comment type="miscellaneous">
    <text>Retrotransposons are mobile genetic entities that are able to replicate via an RNA intermediate and a reverse transcription step. In contrast to retroviruses, retrotransposons are non-infectious, lack an envelope and remain intracellular. Ty1 retrotransposons belong to the copia elements (pseudoviridae).</text>
</comment>
<comment type="miscellaneous">
    <molecule>Isoform Transposon Ty1-ML1 Gag polyprotein</molecule>
    <text>Produced by conventional translation.</text>
</comment>
<dbReference type="EMBL" id="Z47816">
    <property type="protein sequence ID" value="CAA87829.1"/>
    <property type="molecule type" value="Genomic_DNA"/>
</dbReference>
<dbReference type="EMBL" id="BK006946">
    <property type="protein sequence ID" value="DAA09855.1"/>
    <property type="molecule type" value="Genomic_DNA"/>
</dbReference>
<dbReference type="PIR" id="S50947">
    <property type="entry name" value="S50947"/>
</dbReference>
<dbReference type="RefSeq" id="NP_058176.1">
    <molecule id="Q04706-1"/>
    <property type="nucleotide sequence ID" value="NM_001184412.1"/>
</dbReference>
<dbReference type="SMR" id="Q04706"/>
<dbReference type="BioGRID" id="35124">
    <property type="interactions" value="20"/>
</dbReference>
<dbReference type="FunCoup" id="Q04706">
    <property type="interactions" value="48"/>
</dbReference>
<dbReference type="IntAct" id="Q04706">
    <property type="interactions" value="1"/>
</dbReference>
<dbReference type="MINT" id="Q04706"/>
<dbReference type="GlyGen" id="Q04706">
    <property type="glycosylation" value="2 sites"/>
</dbReference>
<dbReference type="PaxDb" id="4932-YML045W-A"/>
<dbReference type="PeptideAtlas" id="Q04706"/>
<dbReference type="GeneID" id="854962"/>
<dbReference type="KEGG" id="sce:YML045W-A"/>
<dbReference type="AGR" id="SGD:S000007381"/>
<dbReference type="SGD" id="S000007381">
    <property type="gene designation" value="YML045W-A"/>
</dbReference>
<dbReference type="VEuPathDB" id="FungiDB:YML045W-A"/>
<dbReference type="eggNOG" id="KOG0017">
    <property type="taxonomic scope" value="Eukaryota"/>
</dbReference>
<dbReference type="HOGENOM" id="CLU_045291_1_0_1"/>
<dbReference type="InParanoid" id="Q04706"/>
<dbReference type="OrthoDB" id="4046078at2759"/>
<dbReference type="Proteomes" id="UP000002311">
    <property type="component" value="Chromosome XIII"/>
</dbReference>
<dbReference type="RNAct" id="Q04706">
    <property type="molecule type" value="protein"/>
</dbReference>
<dbReference type="GO" id="GO:0005737">
    <property type="term" value="C:cytoplasm"/>
    <property type="evidence" value="ECO:0007669"/>
    <property type="project" value="UniProtKB-SubCell"/>
</dbReference>
<dbReference type="GO" id="GO:0003723">
    <property type="term" value="F:RNA binding"/>
    <property type="evidence" value="ECO:0007669"/>
    <property type="project" value="UniProtKB-KW"/>
</dbReference>
<dbReference type="GO" id="GO:0075523">
    <property type="term" value="P:viral translational frameshifting"/>
    <property type="evidence" value="ECO:0007669"/>
    <property type="project" value="UniProtKB-KW"/>
</dbReference>
<dbReference type="InterPro" id="IPR015820">
    <property type="entry name" value="TYA"/>
</dbReference>
<dbReference type="Pfam" id="PF01021">
    <property type="entry name" value="TYA"/>
    <property type="match status" value="1"/>
</dbReference>
<accession>Q04706</accession>
<accession>D6VZD1</accession>
<evidence type="ECO:0000250" key="1"/>
<evidence type="ECO:0000250" key="2">
    <source>
        <dbReference type="UniProtKB" id="Q12441"/>
    </source>
</evidence>
<evidence type="ECO:0000256" key="3">
    <source>
        <dbReference type="SAM" id="MobiDB-lite"/>
    </source>
</evidence>
<evidence type="ECO:0000269" key="4">
    <source>
    </source>
</evidence>
<sequence>MESQQLSNYPNISHGSACASVTSKEVHTNQDPLDVSASKIQEYDKASTKANSQQTTTPASSAVPENLHHASPQPASVPPPQNGPYPQQCMMTQNQANPSGWSFYGHPSMIPYTPYQMSPMYFPPGPQSQFPQYPSSVGTPLSTPSPESGNTFTDSSSADSDMTSTKKYVRPPPMLTSPNDFPNWVKTYIKFLQNSNLGGIIPTVNGKPVRQITDDELTFLYNTFQIFAPSQFLPTWVKDILSVDYTDIMKILSKSIEKMQSDTQEANDIVTLANLQYNGSTPADAFETKVTNIIDRLNNNGIHINNKVACQLIMRGLSGEYKFLRYTRHRHLNMTVAELFLDIHAIYEEQQGSRNSKPNYRRNPSDEKNDSRSYTNTTKPKVIARNPQKTNNSKSKTARAHNVSTSNNSPSTDNDSISKSTTEPIQLNNKHDLHLRPETY</sequence>
<proteinExistence type="evidence at transcript level"/>
<gene>
    <name type="primary">TY1A-ML1</name>
    <name type="synonym">YMLWTy1-1 GAG</name>
    <name type="ordered locus">YML045W-A</name>
    <name type="ORF">YM9827.07</name>
</gene>
<reference key="1">
    <citation type="journal article" date="1997" name="Nature">
        <title>The nucleotide sequence of Saccharomyces cerevisiae chromosome XIII.</title>
        <authorList>
            <person name="Bowman S."/>
            <person name="Churcher C.M."/>
            <person name="Badcock K."/>
            <person name="Brown D."/>
            <person name="Chillingworth T."/>
            <person name="Connor R."/>
            <person name="Dedman K."/>
            <person name="Devlin K."/>
            <person name="Gentles S."/>
            <person name="Hamlin N."/>
            <person name="Hunt S."/>
            <person name="Jagels K."/>
            <person name="Lye G."/>
            <person name="Moule S."/>
            <person name="Odell C."/>
            <person name="Pearson D."/>
            <person name="Rajandream M.A."/>
            <person name="Rice P."/>
            <person name="Skelton J."/>
            <person name="Walsh S.V."/>
            <person name="Whitehead S."/>
            <person name="Barrell B.G."/>
        </authorList>
    </citation>
    <scope>NUCLEOTIDE SEQUENCE [LARGE SCALE GENOMIC DNA]</scope>
    <source>
        <strain>ATCC 204508 / S288c</strain>
    </source>
</reference>
<reference key="2">
    <citation type="journal article" date="2014" name="G3 (Bethesda)">
        <title>The reference genome sequence of Saccharomyces cerevisiae: Then and now.</title>
        <authorList>
            <person name="Engel S.R."/>
            <person name="Dietrich F.S."/>
            <person name="Fisk D.G."/>
            <person name="Binkley G."/>
            <person name="Balakrishnan R."/>
            <person name="Costanzo M.C."/>
            <person name="Dwight S.S."/>
            <person name="Hitz B.C."/>
            <person name="Karra K."/>
            <person name="Nash R.S."/>
            <person name="Weng S."/>
            <person name="Wong E.D."/>
            <person name="Lloyd P."/>
            <person name="Skrzypek M.S."/>
            <person name="Miyasato S.R."/>
            <person name="Simison M."/>
            <person name="Cherry J.M."/>
        </authorList>
    </citation>
    <scope>GENOME REANNOTATION</scope>
    <source>
        <strain>ATCC 204508 / S288c</strain>
    </source>
</reference>
<reference key="3">
    <citation type="journal article" date="1998" name="Genome Res.">
        <title>Transposable elements and genome organization: a comprehensive survey of retrotransposons revealed by the complete Saccharomyces cerevisiae genome sequence.</title>
        <authorList>
            <person name="Kim J.M."/>
            <person name="Vanguri S."/>
            <person name="Boeke J.D."/>
            <person name="Gabriel A."/>
            <person name="Voytas D.F."/>
        </authorList>
    </citation>
    <scope>NOMENCLATURE</scope>
</reference>
<reference key="4">
    <citation type="journal article" date="2002" name="Mol. Cell. Biol.">
        <title>Differential effects of chromatin and Gcn4 on the 50-fold range of expression among individual yeast Ty1 retrotransposons.</title>
        <authorList>
            <person name="Morillon A."/>
            <person name="Benard L."/>
            <person name="Springer M."/>
            <person name="Lesage P."/>
        </authorList>
    </citation>
    <scope>INDUCTION</scope>
</reference>
<reference key="5">
    <citation type="journal article" date="2005" name="Cytogenet. Genome Res.">
        <title>Happy together: the life and times of Ty retrotransposons and their hosts.</title>
        <authorList>
            <person name="Lesage P."/>
            <person name="Todeschini A.L."/>
        </authorList>
    </citation>
    <scope>REVIEW</scope>
</reference>
<feature type="chain" id="PRO_0000203498" description="Transposon Ty1-ML1 Gag polyprotein">
    <location>
        <begin position="1"/>
        <end position="440"/>
    </location>
</feature>
<feature type="chain" id="PRO_0000279121" description="Capsid protein" evidence="1">
    <location>
        <begin position="1"/>
        <end position="401"/>
    </location>
</feature>
<feature type="peptide" id="PRO_0000279122" description="Gag-p4" evidence="1">
    <location>
        <begin position="402"/>
        <end position="440"/>
    </location>
</feature>
<feature type="region of interest" description="Disordered" evidence="3">
    <location>
        <begin position="1"/>
        <end position="88"/>
    </location>
</feature>
<feature type="region of interest" description="Disordered" evidence="3">
    <location>
        <begin position="126"/>
        <end position="173"/>
    </location>
</feature>
<feature type="region of interest" description="RNA-binding" evidence="1">
    <location>
        <begin position="299"/>
        <end position="401"/>
    </location>
</feature>
<feature type="region of interest" description="Disordered" evidence="3">
    <location>
        <begin position="352"/>
        <end position="440"/>
    </location>
</feature>
<feature type="compositionally biased region" description="Polar residues" evidence="3">
    <location>
        <begin position="1"/>
        <end position="23"/>
    </location>
</feature>
<feature type="compositionally biased region" description="Polar residues" evidence="3">
    <location>
        <begin position="48"/>
        <end position="60"/>
    </location>
</feature>
<feature type="compositionally biased region" description="Polar residues" evidence="3">
    <location>
        <begin position="127"/>
        <end position="152"/>
    </location>
</feature>
<feature type="compositionally biased region" description="Low complexity" evidence="3">
    <location>
        <begin position="153"/>
        <end position="165"/>
    </location>
</feature>
<feature type="compositionally biased region" description="Low complexity" evidence="3">
    <location>
        <begin position="402"/>
        <end position="418"/>
    </location>
</feature>
<feature type="compositionally biased region" description="Polar residues" evidence="3">
    <location>
        <begin position="419"/>
        <end position="428"/>
    </location>
</feature>
<feature type="compositionally biased region" description="Basic and acidic residues" evidence="3">
    <location>
        <begin position="429"/>
        <end position="440"/>
    </location>
</feature>
<feature type="site" description="Cleavage; by Ty1 protease" evidence="1">
    <location>
        <begin position="401"/>
        <end position="402"/>
    </location>
</feature>
<feature type="modified residue" description="Phosphoserine" evidence="2">
    <location>
        <position position="416"/>
    </location>
</feature>